<name>DTDA_PYRIL</name>
<gene>
    <name evidence="1" type="primary">dtdA</name>
    <name type="ordered locus">Pisl_0640</name>
</gene>
<feature type="chain" id="PRO_0000345229" description="D-aminoacyl-tRNA deacylase">
    <location>
        <begin position="1"/>
        <end position="252"/>
    </location>
</feature>
<sequence length="252" mass="28201">MYVIVASLNDPVSRIFLDVIAPTPLVKTEGNIEIRKFVDFPVVVYRGEPTDFSREDILASFGKYAIFISRHEMANPRPLFTVHTPGSWPDVSISNPPLTSSIFRTLCKLAYEPYTCAFEATHHTPNTSYISATFVEVGSTENEWKDRKAVETLAQAVEEVLNSQIKPNTPAMAIGDLHYVTVTDPVLKGELDLGHVIPKYVDISLQVVQNAYLKHTTPIERAILFKKNVKNPARSEIIEFLKSRGVEIITKG</sequence>
<proteinExistence type="inferred from homology"/>
<keyword id="KW-0378">Hydrolase</keyword>
<keyword id="KW-0479">Metal-binding</keyword>
<keyword id="KW-0862">Zinc</keyword>
<evidence type="ECO:0000255" key="1">
    <source>
        <dbReference type="HAMAP-Rule" id="MF_00562"/>
    </source>
</evidence>
<accession>A1RS86</accession>
<organism>
    <name type="scientific">Pyrobaculum islandicum (strain DSM 4184 / JCM 9189 / GEO3)</name>
    <dbReference type="NCBI Taxonomy" id="384616"/>
    <lineage>
        <taxon>Archaea</taxon>
        <taxon>Thermoproteota</taxon>
        <taxon>Thermoprotei</taxon>
        <taxon>Thermoproteales</taxon>
        <taxon>Thermoproteaceae</taxon>
        <taxon>Pyrobaculum</taxon>
    </lineage>
</organism>
<comment type="function">
    <text evidence="1">D-aminoacyl-tRNA deacylase with broad substrate specificity. By recycling D-aminoacyl-tRNA to D-amino acids and free tRNA molecules, this enzyme counteracts the toxicity associated with the formation of D-aminoacyl-tRNA entities in vivo.</text>
</comment>
<comment type="catalytic activity">
    <reaction evidence="1">
        <text>a D-aminoacyl-tRNA + H2O = a tRNA + a D-alpha-amino acid + H(+)</text>
        <dbReference type="Rhea" id="RHEA:13953"/>
        <dbReference type="Rhea" id="RHEA-COMP:10123"/>
        <dbReference type="Rhea" id="RHEA-COMP:10124"/>
        <dbReference type="ChEBI" id="CHEBI:15377"/>
        <dbReference type="ChEBI" id="CHEBI:15378"/>
        <dbReference type="ChEBI" id="CHEBI:59871"/>
        <dbReference type="ChEBI" id="CHEBI:78442"/>
        <dbReference type="ChEBI" id="CHEBI:79333"/>
        <dbReference type="EC" id="3.1.1.96"/>
    </reaction>
</comment>
<comment type="catalytic activity">
    <reaction evidence="1">
        <text>glycyl-tRNA(Ala) + H2O = tRNA(Ala) + glycine + H(+)</text>
        <dbReference type="Rhea" id="RHEA:53744"/>
        <dbReference type="Rhea" id="RHEA-COMP:9657"/>
        <dbReference type="Rhea" id="RHEA-COMP:13640"/>
        <dbReference type="ChEBI" id="CHEBI:15377"/>
        <dbReference type="ChEBI" id="CHEBI:15378"/>
        <dbReference type="ChEBI" id="CHEBI:57305"/>
        <dbReference type="ChEBI" id="CHEBI:78442"/>
        <dbReference type="ChEBI" id="CHEBI:78522"/>
        <dbReference type="EC" id="3.1.1.96"/>
    </reaction>
</comment>
<comment type="cofactor">
    <cofactor evidence="1">
        <name>Zn(2+)</name>
        <dbReference type="ChEBI" id="CHEBI:29105"/>
    </cofactor>
    <text evidence="1">Binds 2 Zn(2+) ions per subunit.</text>
</comment>
<comment type="subunit">
    <text evidence="1">Monomer.</text>
</comment>
<comment type="similarity">
    <text evidence="1">Belongs to the DtdA deacylase family.</text>
</comment>
<protein>
    <recommendedName>
        <fullName evidence="1">D-aminoacyl-tRNA deacylase</fullName>
        <ecNumber evidence="1">3.1.1.96</ecNumber>
    </recommendedName>
    <alternativeName>
        <fullName>D-tyrosyl-tRNA(Tyr) deacylase</fullName>
    </alternativeName>
</protein>
<dbReference type="EC" id="3.1.1.96" evidence="1"/>
<dbReference type="EMBL" id="CP000504">
    <property type="protein sequence ID" value="ABL87818.1"/>
    <property type="molecule type" value="Genomic_DNA"/>
</dbReference>
<dbReference type="RefSeq" id="WP_011762394.1">
    <property type="nucleotide sequence ID" value="NC_008701.1"/>
</dbReference>
<dbReference type="SMR" id="A1RS86"/>
<dbReference type="STRING" id="384616.Pisl_0640"/>
<dbReference type="GeneID" id="4616446"/>
<dbReference type="KEGG" id="pis:Pisl_0640"/>
<dbReference type="eggNOG" id="arCOG01616">
    <property type="taxonomic scope" value="Archaea"/>
</dbReference>
<dbReference type="HOGENOM" id="CLU_056464_1_0_2"/>
<dbReference type="OrthoDB" id="9863at2157"/>
<dbReference type="Proteomes" id="UP000002595">
    <property type="component" value="Chromosome"/>
</dbReference>
<dbReference type="GO" id="GO:0051499">
    <property type="term" value="F:D-aminoacyl-tRNA deacylase activity"/>
    <property type="evidence" value="ECO:0007669"/>
    <property type="project" value="UniProtKB-UniRule"/>
</dbReference>
<dbReference type="GO" id="GO:0008270">
    <property type="term" value="F:zinc ion binding"/>
    <property type="evidence" value="ECO:0007669"/>
    <property type="project" value="UniProtKB-UniRule"/>
</dbReference>
<dbReference type="GO" id="GO:0019478">
    <property type="term" value="P:D-amino acid catabolic process"/>
    <property type="evidence" value="ECO:0007669"/>
    <property type="project" value="UniProtKB-UniRule"/>
</dbReference>
<dbReference type="Gene3D" id="3.40.50.10700">
    <property type="entry name" value="AF0625-like"/>
    <property type="match status" value="1"/>
</dbReference>
<dbReference type="Gene3D" id="3.40.630.50">
    <property type="entry name" value="AF0625-like"/>
    <property type="match status" value="1"/>
</dbReference>
<dbReference type="HAMAP" id="MF_00562">
    <property type="entry name" value="Deacylase_DtdA"/>
    <property type="match status" value="1"/>
</dbReference>
<dbReference type="InterPro" id="IPR018033">
    <property type="entry name" value="Deacylase_DtdA_archaea"/>
</dbReference>
<dbReference type="InterPro" id="IPR007508">
    <property type="entry name" value="DtdA"/>
</dbReference>
<dbReference type="PANTHER" id="PTHR34667">
    <property type="entry name" value="D-AMINOACYL-TRNA DEACYLASE"/>
    <property type="match status" value="1"/>
</dbReference>
<dbReference type="PANTHER" id="PTHR34667:SF1">
    <property type="entry name" value="D-AMINOACYL-TRNA DEACYLASE"/>
    <property type="match status" value="1"/>
</dbReference>
<dbReference type="Pfam" id="PF04414">
    <property type="entry name" value="tRNA_deacylase"/>
    <property type="match status" value="1"/>
</dbReference>
<dbReference type="PIRSF" id="PIRSF016210">
    <property type="entry name" value="UCP016210"/>
    <property type="match status" value="1"/>
</dbReference>
<dbReference type="SUPFAM" id="SSF142535">
    <property type="entry name" value="AF0625-like"/>
    <property type="match status" value="1"/>
</dbReference>
<reference key="1">
    <citation type="submission" date="2006-12" db="EMBL/GenBank/DDBJ databases">
        <title>Complete sequence of Pyrobaculum islandicum DSM 4184.</title>
        <authorList>
            <person name="Copeland A."/>
            <person name="Lucas S."/>
            <person name="Lapidus A."/>
            <person name="Barry K."/>
            <person name="Detter J.C."/>
            <person name="Glavina del Rio T."/>
            <person name="Dalin E."/>
            <person name="Tice H."/>
            <person name="Pitluck S."/>
            <person name="Meincke L."/>
            <person name="Brettin T."/>
            <person name="Bruce D."/>
            <person name="Han C."/>
            <person name="Tapia R."/>
            <person name="Gilna P."/>
            <person name="Schmutz J."/>
            <person name="Larimer F."/>
            <person name="Land M."/>
            <person name="Hauser L."/>
            <person name="Kyrpides N."/>
            <person name="Mikhailova N."/>
            <person name="Cozen A.E."/>
            <person name="Fitz-Gibbon S.T."/>
            <person name="House C.H."/>
            <person name="Saltikov C."/>
            <person name="Lowe T."/>
            <person name="Richardson P."/>
        </authorList>
    </citation>
    <scope>NUCLEOTIDE SEQUENCE [LARGE SCALE GENOMIC DNA]</scope>
    <source>
        <strain>DSM 4184 / JCM 9189 / GEO3</strain>
    </source>
</reference>